<evidence type="ECO:0000250" key="1"/>
<evidence type="ECO:0000305" key="2"/>
<feature type="chain" id="PRO_0000190170" description="Lipid-A-disaccharide synthase">
    <location>
        <begin position="1"/>
        <end position="360"/>
    </location>
</feature>
<name>LPXB_HELPJ</name>
<sequence length="360" mass="41566">MPTILVSALEASSNIHLEELRHNLPKDYRFIGVFESKEALYSPREFSIMGFRDVIGRLGFLLKAHKEMVQLAKQADMVLLMDSSSFNIPLAKKIKKQDPHKKIMYYILPQVWAWKKWRAKSLEKYCDFLGAILPFEVGYYQKKAQYVGHPLLDEIKYYKKDIKGETLVFMPGSRKSEIAKMFPLFVKAAQILEQNEGFKRRVLVVPSFFKGLDLKALYGEDIKLFEISYDAHKSLFEAEFAFICSGTATLEAALIGTPFALAYRAKTMDFLIARMLVNLHYIGLANIFYNALNNETPGLGESQLHPELIQHFLSVEGLLKAYEEMDRERYFKESLRLREYLKHGSARKIAEEMAFLLNLT</sequence>
<organism>
    <name type="scientific">Helicobacter pylori (strain J99 / ATCC 700824)</name>
    <name type="common">Campylobacter pylori J99</name>
    <dbReference type="NCBI Taxonomy" id="85963"/>
    <lineage>
        <taxon>Bacteria</taxon>
        <taxon>Pseudomonadati</taxon>
        <taxon>Campylobacterota</taxon>
        <taxon>Epsilonproteobacteria</taxon>
        <taxon>Campylobacterales</taxon>
        <taxon>Helicobacteraceae</taxon>
        <taxon>Helicobacter</taxon>
    </lineage>
</organism>
<dbReference type="EC" id="2.4.1.182"/>
<dbReference type="EMBL" id="AE001439">
    <property type="protein sequence ID" value="AAD06363.1"/>
    <property type="molecule type" value="Genomic_DNA"/>
</dbReference>
<dbReference type="PIR" id="D71888">
    <property type="entry name" value="D71888"/>
</dbReference>
<dbReference type="RefSeq" id="WP_001142216.1">
    <property type="nucleotide sequence ID" value="NC_000921.1"/>
</dbReference>
<dbReference type="SMR" id="Q9ZKY2"/>
<dbReference type="CAZy" id="GT19">
    <property type="family name" value="Glycosyltransferase Family 19"/>
</dbReference>
<dbReference type="KEGG" id="hpj:jhp_0801"/>
<dbReference type="PATRIC" id="fig|85963.30.peg.171"/>
<dbReference type="eggNOG" id="COG0763">
    <property type="taxonomic scope" value="Bacteria"/>
</dbReference>
<dbReference type="UniPathway" id="UPA00973"/>
<dbReference type="Proteomes" id="UP000000804">
    <property type="component" value="Chromosome"/>
</dbReference>
<dbReference type="GO" id="GO:0016020">
    <property type="term" value="C:membrane"/>
    <property type="evidence" value="ECO:0007669"/>
    <property type="project" value="GOC"/>
</dbReference>
<dbReference type="GO" id="GO:0008915">
    <property type="term" value="F:lipid-A-disaccharide synthase activity"/>
    <property type="evidence" value="ECO:0007669"/>
    <property type="project" value="UniProtKB-UniRule"/>
</dbReference>
<dbReference type="GO" id="GO:0005543">
    <property type="term" value="F:phospholipid binding"/>
    <property type="evidence" value="ECO:0007669"/>
    <property type="project" value="TreeGrafter"/>
</dbReference>
<dbReference type="GO" id="GO:0009245">
    <property type="term" value="P:lipid A biosynthetic process"/>
    <property type="evidence" value="ECO:0007669"/>
    <property type="project" value="UniProtKB-UniRule"/>
</dbReference>
<dbReference type="HAMAP" id="MF_00392">
    <property type="entry name" value="LpxB"/>
    <property type="match status" value="1"/>
</dbReference>
<dbReference type="InterPro" id="IPR003835">
    <property type="entry name" value="Glyco_trans_19"/>
</dbReference>
<dbReference type="NCBIfam" id="TIGR00215">
    <property type="entry name" value="lpxB"/>
    <property type="match status" value="1"/>
</dbReference>
<dbReference type="PANTHER" id="PTHR30372">
    <property type="entry name" value="LIPID-A-DISACCHARIDE SYNTHASE"/>
    <property type="match status" value="1"/>
</dbReference>
<dbReference type="PANTHER" id="PTHR30372:SF4">
    <property type="entry name" value="LIPID-A-DISACCHARIDE SYNTHASE, MITOCHONDRIAL-RELATED"/>
    <property type="match status" value="1"/>
</dbReference>
<dbReference type="Pfam" id="PF02684">
    <property type="entry name" value="LpxB"/>
    <property type="match status" value="1"/>
</dbReference>
<dbReference type="SUPFAM" id="SSF53756">
    <property type="entry name" value="UDP-Glycosyltransferase/glycogen phosphorylase"/>
    <property type="match status" value="1"/>
</dbReference>
<keyword id="KW-0328">Glycosyltransferase</keyword>
<keyword id="KW-0441">Lipid A biosynthesis</keyword>
<keyword id="KW-0444">Lipid biosynthesis</keyword>
<keyword id="KW-0443">Lipid metabolism</keyword>
<keyword id="KW-0808">Transferase</keyword>
<proteinExistence type="inferred from homology"/>
<reference key="1">
    <citation type="journal article" date="1999" name="Nature">
        <title>Genomic sequence comparison of two unrelated isolates of the human gastric pathogen Helicobacter pylori.</title>
        <authorList>
            <person name="Alm R.A."/>
            <person name="Ling L.-S.L."/>
            <person name="Moir D.T."/>
            <person name="King B.L."/>
            <person name="Brown E.D."/>
            <person name="Doig P.C."/>
            <person name="Smith D.R."/>
            <person name="Noonan B."/>
            <person name="Guild B.C."/>
            <person name="deJonge B.L."/>
            <person name="Carmel G."/>
            <person name="Tummino P.J."/>
            <person name="Caruso A."/>
            <person name="Uria-Nickelsen M."/>
            <person name="Mills D.M."/>
            <person name="Ives C."/>
            <person name="Gibson R."/>
            <person name="Merberg D."/>
            <person name="Mills S.D."/>
            <person name="Jiang Q."/>
            <person name="Taylor D.E."/>
            <person name="Vovis G.F."/>
            <person name="Trust T.J."/>
        </authorList>
    </citation>
    <scope>NUCLEOTIDE SEQUENCE [LARGE SCALE GENOMIC DNA]</scope>
    <source>
        <strain>J99 / ATCC 700824</strain>
    </source>
</reference>
<accession>Q9ZKY2</accession>
<protein>
    <recommendedName>
        <fullName>Lipid-A-disaccharide synthase</fullName>
        <ecNumber>2.4.1.182</ecNumber>
    </recommendedName>
</protein>
<comment type="function">
    <text evidence="1">Condensation of UDP-2,3-diacylglucosamine and 2,3-diacylglucosamine-1-phosphate to form lipid A disaccharide, a precursor of lipid A, a phosphorylated glycolipid that anchors the lipopolysaccharide to the outer membrane of the cell.</text>
</comment>
<comment type="catalytic activity">
    <reaction>
        <text>a lipid X + a UDP-2-N,3-O-bis[(3R)-3-hydroxyacyl]-alpha-D-glucosamine = a lipid A disaccharide + UDP + H(+)</text>
        <dbReference type="Rhea" id="RHEA:67828"/>
        <dbReference type="ChEBI" id="CHEBI:15378"/>
        <dbReference type="ChEBI" id="CHEBI:58223"/>
        <dbReference type="ChEBI" id="CHEBI:137748"/>
        <dbReference type="ChEBI" id="CHEBI:176338"/>
        <dbReference type="ChEBI" id="CHEBI:176343"/>
        <dbReference type="EC" id="2.4.1.182"/>
    </reaction>
</comment>
<comment type="pathway">
    <text>Bacterial outer membrane biogenesis; LPS lipid A biosynthesis.</text>
</comment>
<comment type="similarity">
    <text evidence="2">Belongs to the LpxB family.</text>
</comment>
<gene>
    <name type="primary">lpxB</name>
    <name type="ordered locus">jhp_0801</name>
</gene>